<dbReference type="EMBL" id="AACS02000003">
    <property type="protein sequence ID" value="EAU91042.1"/>
    <property type="molecule type" value="Genomic_DNA"/>
</dbReference>
<dbReference type="RefSeq" id="XP_001830673.1">
    <property type="nucleotide sequence ID" value="XM_001830621.2"/>
</dbReference>
<dbReference type="SMR" id="A8N767"/>
<dbReference type="GeneID" id="6007117"/>
<dbReference type="KEGG" id="cci:CC1G_03210"/>
<dbReference type="VEuPathDB" id="FungiDB:CC1G_03210"/>
<dbReference type="eggNOG" id="ENOG502R1M5">
    <property type="taxonomic scope" value="Eukaryota"/>
</dbReference>
<dbReference type="HOGENOM" id="CLU_010748_2_1_1"/>
<dbReference type="InParanoid" id="A8N767"/>
<dbReference type="OMA" id="VMTTCKL"/>
<dbReference type="OrthoDB" id="2538135at2759"/>
<dbReference type="Proteomes" id="UP000001861">
    <property type="component" value="Unassembled WGS sequence"/>
</dbReference>
<dbReference type="GO" id="GO:0005634">
    <property type="term" value="C:nucleus"/>
    <property type="evidence" value="ECO:0007669"/>
    <property type="project" value="UniProtKB-SubCell"/>
</dbReference>
<dbReference type="GO" id="GO:0000981">
    <property type="term" value="F:DNA-binding transcription factor activity, RNA polymerase II-specific"/>
    <property type="evidence" value="ECO:0007669"/>
    <property type="project" value="InterPro"/>
</dbReference>
<dbReference type="GO" id="GO:0000977">
    <property type="term" value="F:RNA polymerase II transcription regulatory region sequence-specific DNA binding"/>
    <property type="evidence" value="ECO:0007669"/>
    <property type="project" value="TreeGrafter"/>
</dbReference>
<dbReference type="GO" id="GO:0008270">
    <property type="term" value="F:zinc ion binding"/>
    <property type="evidence" value="ECO:0007669"/>
    <property type="project" value="InterPro"/>
</dbReference>
<dbReference type="GO" id="GO:0009267">
    <property type="term" value="P:cellular response to starvation"/>
    <property type="evidence" value="ECO:0007669"/>
    <property type="project" value="TreeGrafter"/>
</dbReference>
<dbReference type="GO" id="GO:0006094">
    <property type="term" value="P:gluconeogenesis"/>
    <property type="evidence" value="ECO:0007669"/>
    <property type="project" value="UniProtKB-KW"/>
</dbReference>
<dbReference type="CDD" id="cd00067">
    <property type="entry name" value="GAL4"/>
    <property type="match status" value="1"/>
</dbReference>
<dbReference type="CDD" id="cd00130">
    <property type="entry name" value="PAS"/>
    <property type="match status" value="1"/>
</dbReference>
<dbReference type="Gene3D" id="4.10.240.10">
    <property type="entry name" value="Zn(2)-C6 fungal-type DNA-binding domain"/>
    <property type="match status" value="1"/>
</dbReference>
<dbReference type="InterPro" id="IPR050335">
    <property type="entry name" value="ERT1_acuK_gluconeogen_tf"/>
</dbReference>
<dbReference type="InterPro" id="IPR000014">
    <property type="entry name" value="PAS"/>
</dbReference>
<dbReference type="InterPro" id="IPR035965">
    <property type="entry name" value="PAS-like_dom_sf"/>
</dbReference>
<dbReference type="InterPro" id="IPR056751">
    <property type="entry name" value="PAS_13"/>
</dbReference>
<dbReference type="InterPro" id="IPR036864">
    <property type="entry name" value="Zn2-C6_fun-type_DNA-bd_sf"/>
</dbReference>
<dbReference type="InterPro" id="IPR001138">
    <property type="entry name" value="Zn2Cys6_DnaBD"/>
</dbReference>
<dbReference type="PANTHER" id="PTHR47659:SF1">
    <property type="entry name" value="TRANSCRIPTION ACTIVATOR OF GLUCONEOGENESIS ERT1"/>
    <property type="match status" value="1"/>
</dbReference>
<dbReference type="PANTHER" id="PTHR47659">
    <property type="entry name" value="ZN(II)2CYS6 TRANSCRIPTION FACTOR (EUROFUNG)-RELATED"/>
    <property type="match status" value="1"/>
</dbReference>
<dbReference type="Pfam" id="PF24990">
    <property type="entry name" value="PAS_13"/>
    <property type="match status" value="2"/>
</dbReference>
<dbReference type="SMART" id="SM00066">
    <property type="entry name" value="GAL4"/>
    <property type="match status" value="1"/>
</dbReference>
<dbReference type="SUPFAM" id="SSF55785">
    <property type="entry name" value="PYP-like sensor domain (PAS domain)"/>
    <property type="match status" value="1"/>
</dbReference>
<dbReference type="SUPFAM" id="SSF57701">
    <property type="entry name" value="Zn2/Cys6 DNA-binding domain"/>
    <property type="match status" value="1"/>
</dbReference>
<dbReference type="PROSITE" id="PS50048">
    <property type="entry name" value="ZN2_CY6_FUNGAL_2"/>
    <property type="match status" value="1"/>
</dbReference>
<name>ERT1_COPC7</name>
<protein>
    <recommendedName>
        <fullName>Transcription activator of gluconeogenesis ERT1</fullName>
    </recommendedName>
</protein>
<feature type="chain" id="PRO_0000406460" description="Transcription activator of gluconeogenesis ERT1">
    <location>
        <begin position="1"/>
        <end position="541"/>
    </location>
</feature>
<feature type="domain" description="PAS">
    <location>
        <begin position="423"/>
        <end position="495"/>
    </location>
</feature>
<feature type="DNA-binding region" description="Zn(2)-C6 fungal-type" evidence="2">
    <location>
        <begin position="77"/>
        <end position="105"/>
    </location>
</feature>
<feature type="region of interest" description="Disordered" evidence="3">
    <location>
        <begin position="1"/>
        <end position="75"/>
    </location>
</feature>
<feature type="region of interest" description="Disordered" evidence="3">
    <location>
        <begin position="126"/>
        <end position="146"/>
    </location>
</feature>
<feature type="region of interest" description="Disordered" evidence="3">
    <location>
        <begin position="196"/>
        <end position="221"/>
    </location>
</feature>
<feature type="region of interest" description="Disordered" evidence="3">
    <location>
        <begin position="286"/>
        <end position="315"/>
    </location>
</feature>
<feature type="compositionally biased region" description="Low complexity" evidence="3">
    <location>
        <begin position="1"/>
        <end position="39"/>
    </location>
</feature>
<feature type="compositionally biased region" description="Polar residues" evidence="3">
    <location>
        <begin position="48"/>
        <end position="61"/>
    </location>
</feature>
<feature type="compositionally biased region" description="Basic and acidic residues" evidence="3">
    <location>
        <begin position="126"/>
        <end position="136"/>
    </location>
</feature>
<feature type="compositionally biased region" description="Pro residues" evidence="3">
    <location>
        <begin position="196"/>
        <end position="210"/>
    </location>
</feature>
<sequence length="541" mass="59856">MFAVAPRPAPLAPAQAGPSTSPQQTLKKSSSQSSITSAPTKRRRTVTPEDSPQDSAPSQPQKKAREGPKKKKANRACFHCQKAHLTCDDSRPCQRCIKRGIANNCREGHRKKAKYLLDDDELEALKRSKEGAKGKAPEPQPQPQLHQPVVATMPISEPVPQSEQLLTTAFDPTTFAFGSEAANLEYSILSAILGNPSPPDSASSPPPPPSQSHYSWPSDPLDFTASPRLGTSFTSSYTDAQQLSISSDSVLSTSPSAQFLNYSYSQQQRSDEGSDLPYSQYSAQAPLHPLQPRYPLDQRPRSPPTSTVGEKVSTDVASRGLLTPPLSNASPSSIASVPPGVAEIPQPKSAVSHLQSINDRVTKPYDYTEGYHFLMKHLPTRFEKNDILRVVRALAIFRPSLIALQMPLSLDDEIFVEKCFQRSLLELGKLISYSGTPTVVWRRTGEICLVAPEFCMLTEWPMEELVGRRKYIYELFENQSVVEYWENFASHAFENTTRSVYSHCVLLKPDGTPVPATFCFSIRRDLFDLPSMVIGQWLPLL</sequence>
<comment type="function">
    <text evidence="1">Transcription factor which regulates nonfermentable carbon utilization. Activator of gluconeogenetic genes (By similarity).</text>
</comment>
<comment type="subcellular location">
    <subcellularLocation>
        <location evidence="2">Nucleus</location>
    </subcellularLocation>
</comment>
<comment type="similarity">
    <text evidence="4">Belongs to the ERT1/acuK family.</text>
</comment>
<organism>
    <name type="scientific">Coprinopsis cinerea (strain Okayama-7 / 130 / ATCC MYA-4618 / FGSC 9003)</name>
    <name type="common">Inky cap fungus</name>
    <name type="synonym">Hormographiella aspergillata</name>
    <dbReference type="NCBI Taxonomy" id="240176"/>
    <lineage>
        <taxon>Eukaryota</taxon>
        <taxon>Fungi</taxon>
        <taxon>Dikarya</taxon>
        <taxon>Basidiomycota</taxon>
        <taxon>Agaricomycotina</taxon>
        <taxon>Agaricomycetes</taxon>
        <taxon>Agaricomycetidae</taxon>
        <taxon>Agaricales</taxon>
        <taxon>Agaricineae</taxon>
        <taxon>Psathyrellaceae</taxon>
        <taxon>Coprinopsis</taxon>
    </lineage>
</organism>
<evidence type="ECO:0000250" key="1"/>
<evidence type="ECO:0000255" key="2">
    <source>
        <dbReference type="PROSITE-ProRule" id="PRU00227"/>
    </source>
</evidence>
<evidence type="ECO:0000256" key="3">
    <source>
        <dbReference type="SAM" id="MobiDB-lite"/>
    </source>
</evidence>
<evidence type="ECO:0000305" key="4"/>
<accession>A8N767</accession>
<proteinExistence type="inferred from homology"/>
<keyword id="KW-0010">Activator</keyword>
<keyword id="KW-0238">DNA-binding</keyword>
<keyword id="KW-0312">Gluconeogenesis</keyword>
<keyword id="KW-0479">Metal-binding</keyword>
<keyword id="KW-0539">Nucleus</keyword>
<keyword id="KW-1185">Reference proteome</keyword>
<keyword id="KW-0804">Transcription</keyword>
<keyword id="KW-0805">Transcription regulation</keyword>
<keyword id="KW-0862">Zinc</keyword>
<gene>
    <name type="primary">ERT1</name>
    <name type="ORF">CC1G_03210</name>
</gene>
<reference key="1">
    <citation type="journal article" date="2010" name="Proc. Natl. Acad. Sci. U.S.A.">
        <title>Insights into evolution of multicellular fungi from the assembled chromosomes of the mushroom Coprinopsis cinerea (Coprinus cinereus).</title>
        <authorList>
            <person name="Stajich J.E."/>
            <person name="Wilke S.K."/>
            <person name="Ahren D."/>
            <person name="Au C.H."/>
            <person name="Birren B.W."/>
            <person name="Borodovsky M."/>
            <person name="Burns C."/>
            <person name="Canbaeck B."/>
            <person name="Casselton L.A."/>
            <person name="Cheng C.K."/>
            <person name="Deng J."/>
            <person name="Dietrich F.S."/>
            <person name="Fargo D.C."/>
            <person name="Farman M.L."/>
            <person name="Gathman A.C."/>
            <person name="Goldberg J."/>
            <person name="Guigo R."/>
            <person name="Hoegger P.J."/>
            <person name="Hooker J.B."/>
            <person name="Huggins A."/>
            <person name="James T.Y."/>
            <person name="Kamada T."/>
            <person name="Kilaru S."/>
            <person name="Kodira C."/>
            <person name="Kuees U."/>
            <person name="Kupfer D."/>
            <person name="Kwan H.S."/>
            <person name="Lomsadze A."/>
            <person name="Li W."/>
            <person name="Lilly W.W."/>
            <person name="Ma L.-J."/>
            <person name="Mackey A.J."/>
            <person name="Manning G."/>
            <person name="Martin F."/>
            <person name="Muraguchi H."/>
            <person name="Natvig D.O."/>
            <person name="Palmerini H."/>
            <person name="Ramesh M.A."/>
            <person name="Rehmeyer C.J."/>
            <person name="Roe B.A."/>
            <person name="Shenoy N."/>
            <person name="Stanke M."/>
            <person name="Ter-Hovhannisyan V."/>
            <person name="Tunlid A."/>
            <person name="Velagapudi R."/>
            <person name="Vision T.J."/>
            <person name="Zeng Q."/>
            <person name="Zolan M.E."/>
            <person name="Pukkila P.J."/>
        </authorList>
    </citation>
    <scope>NUCLEOTIDE SEQUENCE [LARGE SCALE GENOMIC DNA]</scope>
    <source>
        <strain>Okayama-7 / 130 / ATCC MYA-4618 / FGSC 9003</strain>
    </source>
</reference>